<feature type="chain" id="PRO_0000191742" description="Magnesium transporter NIPA1">
    <location>
        <begin position="1"/>
        <end position="323"/>
    </location>
</feature>
<feature type="topological domain" description="Extracellular" evidence="1">
    <location>
        <begin position="1"/>
        <end position="21"/>
    </location>
</feature>
<feature type="transmembrane region" description="Helical" evidence="1">
    <location>
        <begin position="22"/>
        <end position="42"/>
    </location>
</feature>
<feature type="topological domain" description="Cytoplasmic" evidence="1">
    <location>
        <begin position="43"/>
        <end position="60"/>
    </location>
</feature>
<feature type="transmembrane region" description="Helical" evidence="1">
    <location>
        <begin position="61"/>
        <end position="81"/>
    </location>
</feature>
<feature type="topological domain" description="Extracellular" evidence="1">
    <location>
        <position position="82"/>
    </location>
</feature>
<feature type="transmembrane region" description="Helical" evidence="1">
    <location>
        <begin position="83"/>
        <end position="103"/>
    </location>
</feature>
<feature type="topological domain" description="Cytoplasmic" evidence="1">
    <location>
        <begin position="104"/>
        <end position="111"/>
    </location>
</feature>
<feature type="transmembrane region" description="Helical" evidence="1">
    <location>
        <begin position="112"/>
        <end position="132"/>
    </location>
</feature>
<feature type="topological domain" description="Extracellular" evidence="1">
    <location>
        <begin position="133"/>
        <end position="153"/>
    </location>
</feature>
<feature type="transmembrane region" description="Helical" evidence="1">
    <location>
        <begin position="154"/>
        <end position="174"/>
    </location>
</feature>
<feature type="topological domain" description="Cytoplasmic" evidence="1">
    <location>
        <begin position="175"/>
        <end position="177"/>
    </location>
</feature>
<feature type="transmembrane region" description="Helical" evidence="1">
    <location>
        <begin position="178"/>
        <end position="198"/>
    </location>
</feature>
<feature type="topological domain" description="Extracellular" evidence="1">
    <location>
        <begin position="199"/>
        <end position="218"/>
    </location>
</feature>
<feature type="transmembrane region" description="Helical" evidence="1">
    <location>
        <begin position="219"/>
        <end position="239"/>
    </location>
</feature>
<feature type="topological domain" description="Cytoplasmic" evidence="1">
    <location>
        <begin position="240"/>
        <end position="253"/>
    </location>
</feature>
<feature type="transmembrane region" description="Helical" evidence="1">
    <location>
        <begin position="254"/>
        <end position="274"/>
    </location>
</feature>
<feature type="topological domain" description="Extracellular" evidence="1">
    <location>
        <begin position="275"/>
        <end position="284"/>
    </location>
</feature>
<feature type="transmembrane region" description="Helical" evidence="1">
    <location>
        <begin position="285"/>
        <end position="305"/>
    </location>
</feature>
<feature type="topological domain" description="Cytoplasmic" evidence="1">
    <location>
        <begin position="306"/>
        <end position="323"/>
    </location>
</feature>
<feature type="mutagenesis site" description="Failure to correctly traffic to the cell membrane and diminished Mg(2+) transport." evidence="3">
    <original>T</original>
    <variation>R</variation>
    <location>
        <position position="39"/>
    </location>
</feature>
<feature type="mutagenesis site" description="Failure to correctly traffic to the cell membrane and complete loss of Mg(2+) transport." evidence="3">
    <original>G</original>
    <variation>R</variation>
    <location>
        <position position="100"/>
    </location>
</feature>
<evidence type="ECO:0000255" key="1"/>
<evidence type="ECO:0000269" key="2">
    <source>
    </source>
</evidence>
<evidence type="ECO:0000269" key="3">
    <source>
    </source>
</evidence>
<evidence type="ECO:0000305" key="4"/>
<sequence>MGTAAAAAAAGEGARGPSPAAVSLGLGVAVVSSLVNGSTFVLQKKGIVRAKRRGTSYLTDIVWWAGTIAMAVGQIGNFLAYTAVPTVLVTPLGALGVPFGSILASYLLKEKLNILGKLGCLLSCAGSVVLIIHSPKSESVTTQAELEEKLTNPVFVGYLCIVLLMLLLLIFWIAPAHGPTNIMVYISICSLLGSFTVPSTKGIGLAAQDILHNNPSSQRALCLCLVLLAVLGCSIIVQFRYINKALECFDSSVFGAIYYVVFTTLVLLASAILFREWSNVGLVDFLGMACGFTTVSVGIVLIQVFKEFNFNLGEMNKSNMKTD</sequence>
<accession>Q8BHK1</accession>
<keyword id="KW-1003">Cell membrane</keyword>
<keyword id="KW-0967">Endosome</keyword>
<keyword id="KW-0406">Ion transport</keyword>
<keyword id="KW-0460">Magnesium</keyword>
<keyword id="KW-0472">Membrane</keyword>
<keyword id="KW-1185">Reference proteome</keyword>
<keyword id="KW-0812">Transmembrane</keyword>
<keyword id="KW-1133">Transmembrane helix</keyword>
<keyword id="KW-0813">Transport</keyword>
<dbReference type="EMBL" id="AY098645">
    <property type="protein sequence ID" value="AAM34534.1"/>
    <property type="molecule type" value="mRNA"/>
</dbReference>
<dbReference type="EMBL" id="AK046619">
    <property type="protein sequence ID" value="BAC32809.1"/>
    <property type="molecule type" value="mRNA"/>
</dbReference>
<dbReference type="EMBL" id="BC055828">
    <property type="protein sequence ID" value="AAH55828.1"/>
    <property type="molecule type" value="mRNA"/>
</dbReference>
<dbReference type="CCDS" id="CCDS21317.1"/>
<dbReference type="RefSeq" id="NP_705806.1">
    <property type="nucleotide sequence ID" value="NM_153578.3"/>
</dbReference>
<dbReference type="BioGRID" id="231400">
    <property type="interactions" value="1"/>
</dbReference>
<dbReference type="FunCoup" id="Q8BHK1">
    <property type="interactions" value="167"/>
</dbReference>
<dbReference type="STRING" id="10090.ENSMUSP00000053871"/>
<dbReference type="PhosphoSitePlus" id="Q8BHK1"/>
<dbReference type="PaxDb" id="10090-ENSMUSP00000053871"/>
<dbReference type="ProteomicsDB" id="252896"/>
<dbReference type="Pumba" id="Q8BHK1"/>
<dbReference type="Antibodypedia" id="8965">
    <property type="antibodies" value="26 antibodies from 13 providers"/>
</dbReference>
<dbReference type="DNASU" id="233280"/>
<dbReference type="Ensembl" id="ENSMUST00000052204.6">
    <property type="protein sequence ID" value="ENSMUSP00000053871.6"/>
    <property type="gene ID" value="ENSMUSG00000047037.6"/>
</dbReference>
<dbReference type="GeneID" id="233280"/>
<dbReference type="KEGG" id="mmu:233280"/>
<dbReference type="UCSC" id="uc009hdu.1">
    <property type="organism name" value="mouse"/>
</dbReference>
<dbReference type="AGR" id="MGI:2442058"/>
<dbReference type="CTD" id="123606"/>
<dbReference type="MGI" id="MGI:2442058">
    <property type="gene designation" value="Nipa1"/>
</dbReference>
<dbReference type="VEuPathDB" id="HostDB:ENSMUSG00000047037"/>
<dbReference type="eggNOG" id="KOG2922">
    <property type="taxonomic scope" value="Eukaryota"/>
</dbReference>
<dbReference type="GeneTree" id="ENSGT00940000159067"/>
<dbReference type="HOGENOM" id="CLU_012349_1_1_1"/>
<dbReference type="InParanoid" id="Q8BHK1"/>
<dbReference type="OMA" id="YGKSNIM"/>
<dbReference type="OrthoDB" id="6428174at2759"/>
<dbReference type="PhylomeDB" id="Q8BHK1"/>
<dbReference type="TreeFam" id="TF313214"/>
<dbReference type="Reactome" id="R-MMU-5223345">
    <property type="pathway name" value="Miscellaneous transport and binding events"/>
</dbReference>
<dbReference type="SABIO-RK" id="Q8BHK1"/>
<dbReference type="BioGRID-ORCS" id="233280">
    <property type="hits" value="2 hits in 79 CRISPR screens"/>
</dbReference>
<dbReference type="ChiTaRS" id="Nipa1">
    <property type="organism name" value="mouse"/>
</dbReference>
<dbReference type="PRO" id="PR:Q8BHK1"/>
<dbReference type="Proteomes" id="UP000000589">
    <property type="component" value="Chromosome 7"/>
</dbReference>
<dbReference type="RNAct" id="Q8BHK1">
    <property type="molecule type" value="protein"/>
</dbReference>
<dbReference type="Bgee" id="ENSMUSG00000047037">
    <property type="expression patterns" value="Expressed in cerebellar nuclear complex and 210 other cell types or tissues"/>
</dbReference>
<dbReference type="GO" id="GO:0005769">
    <property type="term" value="C:early endosome"/>
    <property type="evidence" value="ECO:0000314"/>
    <property type="project" value="UniProtKB"/>
</dbReference>
<dbReference type="GO" id="GO:0005886">
    <property type="term" value="C:plasma membrane"/>
    <property type="evidence" value="ECO:0000314"/>
    <property type="project" value="UniProtKB"/>
</dbReference>
<dbReference type="GO" id="GO:0015095">
    <property type="term" value="F:magnesium ion transmembrane transporter activity"/>
    <property type="evidence" value="ECO:0007669"/>
    <property type="project" value="InterPro"/>
</dbReference>
<dbReference type="GO" id="GO:0015693">
    <property type="term" value="P:magnesium ion transport"/>
    <property type="evidence" value="ECO:0000314"/>
    <property type="project" value="UniProtKB"/>
</dbReference>
<dbReference type="InterPro" id="IPR008521">
    <property type="entry name" value="Mg_trans_NIPA"/>
</dbReference>
<dbReference type="PANTHER" id="PTHR12570">
    <property type="match status" value="1"/>
</dbReference>
<dbReference type="PANTHER" id="PTHR12570:SF17">
    <property type="entry name" value="MAGNESIUM TRANSPORTER NIPA1"/>
    <property type="match status" value="1"/>
</dbReference>
<dbReference type="Pfam" id="PF05653">
    <property type="entry name" value="Mg_trans_NIPA"/>
    <property type="match status" value="1"/>
</dbReference>
<dbReference type="SUPFAM" id="SSF103481">
    <property type="entry name" value="Multidrug resistance efflux transporter EmrE"/>
    <property type="match status" value="1"/>
</dbReference>
<comment type="function">
    <text evidence="3">Acts as a Mg(2+) transporter. Can also transport other divalent cations such as Fe(2+), Sr(2+), Ba(2+), Zn(2+) and Co(2+) but to a much less extent than Mg(2+).</text>
</comment>
<comment type="catalytic activity">
    <reaction evidence="3">
        <text>Mg(2+)(in) = Mg(2+)(out)</text>
        <dbReference type="Rhea" id="RHEA:29827"/>
        <dbReference type="ChEBI" id="CHEBI:18420"/>
    </reaction>
</comment>
<comment type="biophysicochemical properties">
    <kinetics>
        <KM evidence="3">0.69 mM for magnesium ions</KM>
    </kinetics>
</comment>
<comment type="subunit">
    <text evidence="4">Homodimer.</text>
</comment>
<comment type="subcellular location">
    <subcellularLocation>
        <location evidence="3">Cell membrane</location>
        <topology evidence="1">Multi-pass membrane protein</topology>
    </subcellularLocation>
    <subcellularLocation>
        <location evidence="3">Early endosome</location>
    </subcellularLocation>
    <text>Recruited to the cell membrane in response to low extracellular magnesium.</text>
</comment>
<comment type="tissue specificity">
    <text evidence="2 3">Widely expressed. Predominantly expressed in neuronal tissues. Brain, heart, kidney, liver and colon (at protein level).</text>
</comment>
<comment type="induction">
    <text evidence="3">Up-regulated by low magnesium ion levels.</text>
</comment>
<comment type="similarity">
    <text evidence="4">Belongs to the NIPA family.</text>
</comment>
<gene>
    <name type="primary">Nipa1</name>
    <name type="synonym">Spg6</name>
</gene>
<organism>
    <name type="scientific">Mus musculus</name>
    <name type="common">Mouse</name>
    <dbReference type="NCBI Taxonomy" id="10090"/>
    <lineage>
        <taxon>Eukaryota</taxon>
        <taxon>Metazoa</taxon>
        <taxon>Chordata</taxon>
        <taxon>Craniata</taxon>
        <taxon>Vertebrata</taxon>
        <taxon>Euteleostomi</taxon>
        <taxon>Mammalia</taxon>
        <taxon>Eutheria</taxon>
        <taxon>Euarchontoglires</taxon>
        <taxon>Glires</taxon>
        <taxon>Rodentia</taxon>
        <taxon>Myomorpha</taxon>
        <taxon>Muroidea</taxon>
        <taxon>Muridae</taxon>
        <taxon>Murinae</taxon>
        <taxon>Mus</taxon>
        <taxon>Mus</taxon>
    </lineage>
</organism>
<proteinExistence type="evidence at protein level"/>
<protein>
    <recommendedName>
        <fullName>Magnesium transporter NIPA1</fullName>
    </recommendedName>
    <alternativeName>
        <fullName>Non-imprinted in Prader-Willi/Angelman syndrome region protein 1 homolog</fullName>
    </alternativeName>
</protein>
<name>NIPA1_MOUSE</name>
<reference key="1">
    <citation type="journal article" date="2003" name="Am. J. Hum. Genet.">
        <title>Identification of four highly conserved genes between breakpoint hotspots BP1 and BP2 of the Prader-Willi/Angelman syndromes deletion region that have undergone evolutionary transposition mediated by flanking duplicons.</title>
        <authorList>
            <person name="Chai J.-H."/>
            <person name="Locke D.P."/>
            <person name="Greally J.M."/>
            <person name="Knoll J.H.M."/>
            <person name="Ohta T."/>
            <person name="Dunai J."/>
            <person name="Yavor A."/>
            <person name="Eichler E.E."/>
            <person name="Nicholls R.D."/>
        </authorList>
    </citation>
    <scope>NUCLEOTIDE SEQUENCE [MRNA]</scope>
    <scope>TISSUE SPECIFICITY</scope>
    <source>
        <strain>FVB/N</strain>
        <tissue>Salivary gland</tissue>
    </source>
</reference>
<reference key="2">
    <citation type="journal article" date="2005" name="Science">
        <title>The transcriptional landscape of the mammalian genome.</title>
        <authorList>
            <person name="Carninci P."/>
            <person name="Kasukawa T."/>
            <person name="Katayama S."/>
            <person name="Gough J."/>
            <person name="Frith M.C."/>
            <person name="Maeda N."/>
            <person name="Oyama R."/>
            <person name="Ravasi T."/>
            <person name="Lenhard B."/>
            <person name="Wells C."/>
            <person name="Kodzius R."/>
            <person name="Shimokawa K."/>
            <person name="Bajic V.B."/>
            <person name="Brenner S.E."/>
            <person name="Batalov S."/>
            <person name="Forrest A.R."/>
            <person name="Zavolan M."/>
            <person name="Davis M.J."/>
            <person name="Wilming L.G."/>
            <person name="Aidinis V."/>
            <person name="Allen J.E."/>
            <person name="Ambesi-Impiombato A."/>
            <person name="Apweiler R."/>
            <person name="Aturaliya R.N."/>
            <person name="Bailey T.L."/>
            <person name="Bansal M."/>
            <person name="Baxter L."/>
            <person name="Beisel K.W."/>
            <person name="Bersano T."/>
            <person name="Bono H."/>
            <person name="Chalk A.M."/>
            <person name="Chiu K.P."/>
            <person name="Choudhary V."/>
            <person name="Christoffels A."/>
            <person name="Clutterbuck D.R."/>
            <person name="Crowe M.L."/>
            <person name="Dalla E."/>
            <person name="Dalrymple B.P."/>
            <person name="de Bono B."/>
            <person name="Della Gatta G."/>
            <person name="di Bernardo D."/>
            <person name="Down T."/>
            <person name="Engstrom P."/>
            <person name="Fagiolini M."/>
            <person name="Faulkner G."/>
            <person name="Fletcher C.F."/>
            <person name="Fukushima T."/>
            <person name="Furuno M."/>
            <person name="Futaki S."/>
            <person name="Gariboldi M."/>
            <person name="Georgii-Hemming P."/>
            <person name="Gingeras T.R."/>
            <person name="Gojobori T."/>
            <person name="Green R.E."/>
            <person name="Gustincich S."/>
            <person name="Harbers M."/>
            <person name="Hayashi Y."/>
            <person name="Hensch T.K."/>
            <person name="Hirokawa N."/>
            <person name="Hill D."/>
            <person name="Huminiecki L."/>
            <person name="Iacono M."/>
            <person name="Ikeo K."/>
            <person name="Iwama A."/>
            <person name="Ishikawa T."/>
            <person name="Jakt M."/>
            <person name="Kanapin A."/>
            <person name="Katoh M."/>
            <person name="Kawasawa Y."/>
            <person name="Kelso J."/>
            <person name="Kitamura H."/>
            <person name="Kitano H."/>
            <person name="Kollias G."/>
            <person name="Krishnan S.P."/>
            <person name="Kruger A."/>
            <person name="Kummerfeld S.K."/>
            <person name="Kurochkin I.V."/>
            <person name="Lareau L.F."/>
            <person name="Lazarevic D."/>
            <person name="Lipovich L."/>
            <person name="Liu J."/>
            <person name="Liuni S."/>
            <person name="McWilliam S."/>
            <person name="Madan Babu M."/>
            <person name="Madera M."/>
            <person name="Marchionni L."/>
            <person name="Matsuda H."/>
            <person name="Matsuzawa S."/>
            <person name="Miki H."/>
            <person name="Mignone F."/>
            <person name="Miyake S."/>
            <person name="Morris K."/>
            <person name="Mottagui-Tabar S."/>
            <person name="Mulder N."/>
            <person name="Nakano N."/>
            <person name="Nakauchi H."/>
            <person name="Ng P."/>
            <person name="Nilsson R."/>
            <person name="Nishiguchi S."/>
            <person name="Nishikawa S."/>
            <person name="Nori F."/>
            <person name="Ohara O."/>
            <person name="Okazaki Y."/>
            <person name="Orlando V."/>
            <person name="Pang K.C."/>
            <person name="Pavan W.J."/>
            <person name="Pavesi G."/>
            <person name="Pesole G."/>
            <person name="Petrovsky N."/>
            <person name="Piazza S."/>
            <person name="Reed J."/>
            <person name="Reid J.F."/>
            <person name="Ring B.Z."/>
            <person name="Ringwald M."/>
            <person name="Rost B."/>
            <person name="Ruan Y."/>
            <person name="Salzberg S.L."/>
            <person name="Sandelin A."/>
            <person name="Schneider C."/>
            <person name="Schoenbach C."/>
            <person name="Sekiguchi K."/>
            <person name="Semple C.A."/>
            <person name="Seno S."/>
            <person name="Sessa L."/>
            <person name="Sheng Y."/>
            <person name="Shibata Y."/>
            <person name="Shimada H."/>
            <person name="Shimada K."/>
            <person name="Silva D."/>
            <person name="Sinclair B."/>
            <person name="Sperling S."/>
            <person name="Stupka E."/>
            <person name="Sugiura K."/>
            <person name="Sultana R."/>
            <person name="Takenaka Y."/>
            <person name="Taki K."/>
            <person name="Tammoja K."/>
            <person name="Tan S.L."/>
            <person name="Tang S."/>
            <person name="Taylor M.S."/>
            <person name="Tegner J."/>
            <person name="Teichmann S.A."/>
            <person name="Ueda H.R."/>
            <person name="van Nimwegen E."/>
            <person name="Verardo R."/>
            <person name="Wei C.L."/>
            <person name="Yagi K."/>
            <person name="Yamanishi H."/>
            <person name="Zabarovsky E."/>
            <person name="Zhu S."/>
            <person name="Zimmer A."/>
            <person name="Hide W."/>
            <person name="Bult C."/>
            <person name="Grimmond S.M."/>
            <person name="Teasdale R.D."/>
            <person name="Liu E.T."/>
            <person name="Brusic V."/>
            <person name="Quackenbush J."/>
            <person name="Wahlestedt C."/>
            <person name="Mattick J.S."/>
            <person name="Hume D.A."/>
            <person name="Kai C."/>
            <person name="Sasaki D."/>
            <person name="Tomaru Y."/>
            <person name="Fukuda S."/>
            <person name="Kanamori-Katayama M."/>
            <person name="Suzuki M."/>
            <person name="Aoki J."/>
            <person name="Arakawa T."/>
            <person name="Iida J."/>
            <person name="Imamura K."/>
            <person name="Itoh M."/>
            <person name="Kato T."/>
            <person name="Kawaji H."/>
            <person name="Kawagashira N."/>
            <person name="Kawashima T."/>
            <person name="Kojima M."/>
            <person name="Kondo S."/>
            <person name="Konno H."/>
            <person name="Nakano K."/>
            <person name="Ninomiya N."/>
            <person name="Nishio T."/>
            <person name="Okada M."/>
            <person name="Plessy C."/>
            <person name="Shibata K."/>
            <person name="Shiraki T."/>
            <person name="Suzuki S."/>
            <person name="Tagami M."/>
            <person name="Waki K."/>
            <person name="Watahiki A."/>
            <person name="Okamura-Oho Y."/>
            <person name="Suzuki H."/>
            <person name="Kawai J."/>
            <person name="Hayashizaki Y."/>
        </authorList>
    </citation>
    <scope>NUCLEOTIDE SEQUENCE [LARGE SCALE MRNA]</scope>
    <source>
        <strain>C57BL/6J</strain>
        <tissue>Adipose tissue</tissue>
    </source>
</reference>
<reference key="3">
    <citation type="journal article" date="2004" name="Genome Res.">
        <title>The status, quality, and expansion of the NIH full-length cDNA project: the Mammalian Gene Collection (MGC).</title>
        <authorList>
            <consortium name="The MGC Project Team"/>
        </authorList>
    </citation>
    <scope>NUCLEOTIDE SEQUENCE [LARGE SCALE MRNA]</scope>
    <source>
        <strain>FVB/N</strain>
        <tissue>Salivary gland</tissue>
    </source>
</reference>
<reference key="4">
    <citation type="journal article" date="2007" name="J. Biol. Chem.">
        <title>NIPA1(SPG6), the basis for autosomal dominant form of hereditary spastic paraplegia, encodes a functional Mg2+ transporter.</title>
        <authorList>
            <person name="Goytain A."/>
            <person name="Hines R.M."/>
            <person name="El-Husseini A."/>
            <person name="Quamme G.A."/>
        </authorList>
    </citation>
    <scope>FUNCTION</scope>
    <scope>SUBCELLULAR LOCATION</scope>
    <scope>INDUCTION</scope>
    <scope>TISSUE SPECIFICITY</scope>
    <scope>SUBUNIT</scope>
    <scope>BIOPHYSICOCHEMICAL PROPERTIES</scope>
    <scope>MUTAGENESIS OF THR-39 AND GLY-100</scope>
    <scope>CATALYTIC ACTIVITY</scope>
</reference>